<gene>
    <name evidence="1" type="primary">guaAA</name>
    <name type="ordered locus">Igni_1345</name>
</gene>
<comment type="function">
    <text evidence="1">Catalyzes the synthesis of GMP from XMP.</text>
</comment>
<comment type="catalytic activity">
    <reaction evidence="1">
        <text>XMP + L-glutamine + ATP + H2O = GMP + L-glutamate + AMP + diphosphate + 2 H(+)</text>
        <dbReference type="Rhea" id="RHEA:11680"/>
        <dbReference type="ChEBI" id="CHEBI:15377"/>
        <dbReference type="ChEBI" id="CHEBI:15378"/>
        <dbReference type="ChEBI" id="CHEBI:29985"/>
        <dbReference type="ChEBI" id="CHEBI:30616"/>
        <dbReference type="ChEBI" id="CHEBI:33019"/>
        <dbReference type="ChEBI" id="CHEBI:57464"/>
        <dbReference type="ChEBI" id="CHEBI:58115"/>
        <dbReference type="ChEBI" id="CHEBI:58359"/>
        <dbReference type="ChEBI" id="CHEBI:456215"/>
        <dbReference type="EC" id="6.3.5.2"/>
    </reaction>
</comment>
<comment type="pathway">
    <text evidence="1">Purine metabolism; GMP biosynthesis; GMP from XMP (L-Gln route): step 1/1.</text>
</comment>
<comment type="subunit">
    <text evidence="1">Heterodimer composed of a glutamine amidotransferase subunit (A) and a GMP-binding subunit (B).</text>
</comment>
<proteinExistence type="inferred from homology"/>
<protein>
    <recommendedName>
        <fullName evidence="1">GMP synthase [glutamine-hydrolyzing] subunit A</fullName>
        <ecNumber evidence="1">6.3.5.2</ecNumber>
    </recommendedName>
    <alternativeName>
        <fullName evidence="1">Glutamine amidotransferase</fullName>
    </alternativeName>
</protein>
<evidence type="ECO:0000255" key="1">
    <source>
        <dbReference type="HAMAP-Rule" id="MF_01510"/>
    </source>
</evidence>
<sequence length="188" mass="21143">MVKVLVVAFGGQYNHLIKRSIERIGHEAALRPYNLPPPDEGEFDCVVFGGGPLTMPKDFDKVKGLEAYLRWKKPLLGICLGHQVLALLNGGEVGPSPKPEYGDVTIFVDDEDDILRGLAPSFRAWESHNEEVLREPPNSKVIAHSENTRVQALKYYNGPYYGVQFHPEVQHTEKGSLVFQNFVELCKR</sequence>
<feature type="chain" id="PRO_0000316092" description="GMP synthase [glutamine-hydrolyzing] subunit A">
    <location>
        <begin position="1"/>
        <end position="188"/>
    </location>
</feature>
<feature type="domain" description="Glutamine amidotransferase type-1" evidence="1">
    <location>
        <begin position="3"/>
        <end position="188"/>
    </location>
</feature>
<feature type="active site" description="Nucleophile" evidence="1">
    <location>
        <position position="79"/>
    </location>
</feature>
<feature type="active site" evidence="1">
    <location>
        <position position="166"/>
    </location>
</feature>
<feature type="active site" evidence="1">
    <location>
        <position position="168"/>
    </location>
</feature>
<name>GUAAA_IGNH4</name>
<reference key="1">
    <citation type="journal article" date="2008" name="Genome Biol.">
        <title>A genomic analysis of the archaeal system Ignicoccus hospitalis-Nanoarchaeum equitans.</title>
        <authorList>
            <person name="Podar M."/>
            <person name="Anderson I."/>
            <person name="Makarova K.S."/>
            <person name="Elkins J.G."/>
            <person name="Ivanova N."/>
            <person name="Wall M.A."/>
            <person name="Lykidis A."/>
            <person name="Mavromatis K."/>
            <person name="Sun H."/>
            <person name="Hudson M.E."/>
            <person name="Chen W."/>
            <person name="Deciu C."/>
            <person name="Hutchison D."/>
            <person name="Eads J.R."/>
            <person name="Anderson A."/>
            <person name="Fernandes F."/>
            <person name="Szeto E."/>
            <person name="Lapidus A."/>
            <person name="Kyrpides N.C."/>
            <person name="Saier M.H. Jr."/>
            <person name="Richardson P.M."/>
            <person name="Rachel R."/>
            <person name="Huber H."/>
            <person name="Eisen J.A."/>
            <person name="Koonin E.V."/>
            <person name="Keller M."/>
            <person name="Stetter K.O."/>
        </authorList>
    </citation>
    <scope>NUCLEOTIDE SEQUENCE [LARGE SCALE GENOMIC DNA]</scope>
    <source>
        <strain>KIN4/I / DSM 18386 / JCM 14125</strain>
    </source>
</reference>
<organism>
    <name type="scientific">Ignicoccus hospitalis (strain KIN4/I / DSM 18386 / JCM 14125)</name>
    <dbReference type="NCBI Taxonomy" id="453591"/>
    <lineage>
        <taxon>Archaea</taxon>
        <taxon>Thermoproteota</taxon>
        <taxon>Thermoprotei</taxon>
        <taxon>Desulfurococcales</taxon>
        <taxon>Desulfurococcaceae</taxon>
        <taxon>Ignicoccus</taxon>
    </lineage>
</organism>
<accession>A8AC69</accession>
<dbReference type="EC" id="6.3.5.2" evidence="1"/>
<dbReference type="EMBL" id="CP000816">
    <property type="protein sequence ID" value="ABU82521.1"/>
    <property type="molecule type" value="Genomic_DNA"/>
</dbReference>
<dbReference type="RefSeq" id="WP_012123485.1">
    <property type="nucleotide sequence ID" value="NC_009776.1"/>
</dbReference>
<dbReference type="SMR" id="A8AC69"/>
<dbReference type="STRING" id="453591.Igni_1345"/>
<dbReference type="MEROPS" id="C26.A31"/>
<dbReference type="GeneID" id="5563166"/>
<dbReference type="KEGG" id="iho:Igni_1345"/>
<dbReference type="eggNOG" id="arCOG00087">
    <property type="taxonomic scope" value="Archaea"/>
</dbReference>
<dbReference type="HOGENOM" id="CLU_014340_1_4_2"/>
<dbReference type="OrthoDB" id="33844at2157"/>
<dbReference type="PhylomeDB" id="A8AC69"/>
<dbReference type="UniPathway" id="UPA00189">
    <property type="reaction ID" value="UER00296"/>
</dbReference>
<dbReference type="Proteomes" id="UP000000262">
    <property type="component" value="Chromosome"/>
</dbReference>
<dbReference type="GO" id="GO:0005829">
    <property type="term" value="C:cytosol"/>
    <property type="evidence" value="ECO:0007669"/>
    <property type="project" value="TreeGrafter"/>
</dbReference>
<dbReference type="GO" id="GO:0005524">
    <property type="term" value="F:ATP binding"/>
    <property type="evidence" value="ECO:0007669"/>
    <property type="project" value="UniProtKB-KW"/>
</dbReference>
<dbReference type="GO" id="GO:0003921">
    <property type="term" value="F:GMP synthase activity"/>
    <property type="evidence" value="ECO:0007669"/>
    <property type="project" value="TreeGrafter"/>
</dbReference>
<dbReference type="Gene3D" id="3.40.50.880">
    <property type="match status" value="1"/>
</dbReference>
<dbReference type="HAMAP" id="MF_01510">
    <property type="entry name" value="GMP_synthase_A"/>
    <property type="match status" value="1"/>
</dbReference>
<dbReference type="InterPro" id="IPR029062">
    <property type="entry name" value="Class_I_gatase-like"/>
</dbReference>
<dbReference type="InterPro" id="IPR017926">
    <property type="entry name" value="GATASE"/>
</dbReference>
<dbReference type="InterPro" id="IPR023686">
    <property type="entry name" value="GMP_synthase_A"/>
</dbReference>
<dbReference type="NCBIfam" id="NF001975">
    <property type="entry name" value="PRK00758.1"/>
    <property type="match status" value="1"/>
</dbReference>
<dbReference type="PANTHER" id="PTHR11922:SF2">
    <property type="entry name" value="GMP SYNTHASE [GLUTAMINE-HYDROLYZING]"/>
    <property type="match status" value="1"/>
</dbReference>
<dbReference type="PANTHER" id="PTHR11922">
    <property type="entry name" value="GMP SYNTHASE-RELATED"/>
    <property type="match status" value="1"/>
</dbReference>
<dbReference type="Pfam" id="PF00117">
    <property type="entry name" value="GATase"/>
    <property type="match status" value="1"/>
</dbReference>
<dbReference type="PRINTS" id="PR00097">
    <property type="entry name" value="ANTSNTHASEII"/>
</dbReference>
<dbReference type="PRINTS" id="PR00099">
    <property type="entry name" value="CPSGATASE"/>
</dbReference>
<dbReference type="PRINTS" id="PR00096">
    <property type="entry name" value="GATASE"/>
</dbReference>
<dbReference type="SUPFAM" id="SSF52317">
    <property type="entry name" value="Class I glutamine amidotransferase-like"/>
    <property type="match status" value="1"/>
</dbReference>
<dbReference type="PROSITE" id="PS51273">
    <property type="entry name" value="GATASE_TYPE_1"/>
    <property type="match status" value="1"/>
</dbReference>
<keyword id="KW-0067">ATP-binding</keyword>
<keyword id="KW-0315">Glutamine amidotransferase</keyword>
<keyword id="KW-0332">GMP biosynthesis</keyword>
<keyword id="KW-0436">Ligase</keyword>
<keyword id="KW-0547">Nucleotide-binding</keyword>
<keyword id="KW-0658">Purine biosynthesis</keyword>
<keyword id="KW-1185">Reference proteome</keyword>